<comment type="function">
    <text evidence="2">Essential for RNA polymerase III to make a number of small nuclear and cytoplasmic RNAs, including 5S RNA, tRNA, and adenovirus-associated (VA) RNA of both cellular and viral origin. Has histone acetyltransferase activity (HAT) with unique specificity for free and nucleosomal H3. May cooperate with GTF3C5 in facilitating the recruitment of TFIIIB and RNA polymerase through direct interactions with BRF1, POLR3C and POLR3F. May be localized close to the A box (By similarity).</text>
</comment>
<comment type="catalytic activity">
    <reaction evidence="2">
        <text>L-lysyl-[protein] + acetyl-CoA = N(6)-acetyl-L-lysyl-[protein] + CoA + H(+)</text>
        <dbReference type="Rhea" id="RHEA:45948"/>
        <dbReference type="Rhea" id="RHEA-COMP:9752"/>
        <dbReference type="Rhea" id="RHEA-COMP:10731"/>
        <dbReference type="ChEBI" id="CHEBI:15378"/>
        <dbReference type="ChEBI" id="CHEBI:29969"/>
        <dbReference type="ChEBI" id="CHEBI:57287"/>
        <dbReference type="ChEBI" id="CHEBI:57288"/>
        <dbReference type="ChEBI" id="CHEBI:61930"/>
        <dbReference type="EC" id="2.3.1.48"/>
    </reaction>
</comment>
<comment type="subunit">
    <text evidence="1">Part of the TFIIIC subcomplex TFIIIC2, consisting of six subunits, GTF3C1, GTF3C2, GTF3C3, GTF3C4, GTF3C5 and GTF3C6. Interacts with BRF1, GTF3C1, GTF3C2, GTF3C5, GTF3C6, POLR3C and POLR3F (By similarity).</text>
</comment>
<comment type="subcellular location">
    <subcellularLocation>
        <location evidence="1">Nucleus</location>
    </subcellularLocation>
</comment>
<comment type="alternative products">
    <event type="alternative splicing"/>
    <isoform>
        <id>Q8BMQ2-1</id>
        <name>1</name>
        <sequence type="displayed"/>
    </isoform>
    <isoform>
        <id>Q8BMQ2-2</id>
        <name>2</name>
        <sequence type="described" ref="VSP_010577"/>
    </isoform>
    <isoform>
        <id>Q8BMQ2-3</id>
        <name>3</name>
        <sequence type="described" ref="VSP_010578"/>
    </isoform>
</comment>
<comment type="similarity">
    <text evidence="6">Belongs to the TFIIIC subunit 4 family.</text>
</comment>
<name>TF3C4_MOUSE</name>
<accession>Q8BMQ2</accession>
<accession>Q148Y1</accession>
<accession>Q8BKZ4</accession>
<feature type="chain" id="PRO_0000209714" description="General transcription factor 3C polypeptide 4">
    <location>
        <begin position="1"/>
        <end position="817"/>
    </location>
</feature>
<feature type="region of interest" description="Disordered" evidence="3">
    <location>
        <begin position="1"/>
        <end position="40"/>
    </location>
</feature>
<feature type="region of interest" description="Disordered" evidence="3">
    <location>
        <begin position="603"/>
        <end position="658"/>
    </location>
</feature>
<feature type="modified residue" description="N-acetylmethionine" evidence="2">
    <location>
        <position position="1"/>
    </location>
</feature>
<feature type="modified residue" description="Phosphoserine" evidence="2">
    <location>
        <position position="600"/>
    </location>
</feature>
<feature type="modified residue" description="Phosphoserine" evidence="7">
    <location>
        <position position="607"/>
    </location>
</feature>
<feature type="modified residue" description="Phosphoserine" evidence="2">
    <location>
        <position position="647"/>
    </location>
</feature>
<feature type="cross-link" description="Glycyl lysine isopeptide (Lys-Gly) (interchain with G-Cter in SUMO2)" evidence="2">
    <location>
        <position position="221"/>
    </location>
</feature>
<feature type="cross-link" description="Glycyl lysine isopeptide (Lys-Gly) (interchain with G-Cter in SUMO2)" evidence="2">
    <location>
        <position position="624"/>
    </location>
</feature>
<feature type="splice variant" id="VSP_010577" description="In isoform 2." evidence="5">
    <location>
        <begin position="1"/>
        <end position="323"/>
    </location>
</feature>
<feature type="splice variant" id="VSP_010578" description="In isoform 3." evidence="4">
    <location>
        <begin position="270"/>
        <end position="817"/>
    </location>
</feature>
<feature type="sequence conflict" description="In Ref. 1; BAC26916." evidence="6" ref="1">
    <original>E</original>
    <variation>Q</variation>
    <location>
        <position position="21"/>
    </location>
</feature>
<feature type="sequence conflict" description="In Ref. 1; BAC26916." evidence="6" ref="1">
    <original>P</original>
    <variation>H</variation>
    <location>
        <position position="703"/>
    </location>
</feature>
<evidence type="ECO:0000250" key="1"/>
<evidence type="ECO:0000250" key="2">
    <source>
        <dbReference type="UniProtKB" id="Q9UKN8"/>
    </source>
</evidence>
<evidence type="ECO:0000256" key="3">
    <source>
        <dbReference type="SAM" id="MobiDB-lite"/>
    </source>
</evidence>
<evidence type="ECO:0000303" key="4">
    <source>
    </source>
</evidence>
<evidence type="ECO:0000303" key="5">
    <source>
    </source>
</evidence>
<evidence type="ECO:0000305" key="6"/>
<evidence type="ECO:0007744" key="7">
    <source>
    </source>
</evidence>
<dbReference type="EC" id="2.3.1.48" evidence="2"/>
<dbReference type="EMBL" id="AK030351">
    <property type="protein sequence ID" value="BAC26916.1"/>
    <property type="molecule type" value="mRNA"/>
</dbReference>
<dbReference type="EMBL" id="AK047698">
    <property type="protein sequence ID" value="BAC33130.1"/>
    <property type="molecule type" value="mRNA"/>
</dbReference>
<dbReference type="EMBL" id="AL732526">
    <property type="status" value="NOT_ANNOTATED_CDS"/>
    <property type="molecule type" value="Genomic_DNA"/>
</dbReference>
<dbReference type="EMBL" id="CH466542">
    <property type="protein sequence ID" value="EDL08398.1"/>
    <property type="molecule type" value="Genomic_DNA"/>
</dbReference>
<dbReference type="EMBL" id="BC061476">
    <property type="protein sequence ID" value="AAH61476.1"/>
    <property type="molecule type" value="mRNA"/>
</dbReference>
<dbReference type="EMBL" id="BC117919">
    <property type="protein sequence ID" value="AAI17920.1"/>
    <property type="molecule type" value="mRNA"/>
</dbReference>
<dbReference type="EMBL" id="BC117920">
    <property type="protein sequence ID" value="AAI17921.1"/>
    <property type="molecule type" value="mRNA"/>
</dbReference>
<dbReference type="CCDS" id="CCDS15847.1">
    <molecule id="Q8BMQ2-1"/>
</dbReference>
<dbReference type="RefSeq" id="NP_001159505.1">
    <property type="nucleotide sequence ID" value="NM_001166033.1"/>
</dbReference>
<dbReference type="RefSeq" id="NP_766565.2">
    <molecule id="Q8BMQ2-1"/>
    <property type="nucleotide sequence ID" value="NM_172977.3"/>
</dbReference>
<dbReference type="SMR" id="Q8BMQ2"/>
<dbReference type="BioGRID" id="234628">
    <property type="interactions" value="25"/>
</dbReference>
<dbReference type="FunCoup" id="Q8BMQ2">
    <property type="interactions" value="3688"/>
</dbReference>
<dbReference type="IntAct" id="Q8BMQ2">
    <property type="interactions" value="16"/>
</dbReference>
<dbReference type="MINT" id="Q8BMQ2"/>
<dbReference type="STRING" id="10090.ENSMUSP00000042265"/>
<dbReference type="iPTMnet" id="Q8BMQ2"/>
<dbReference type="PhosphoSitePlus" id="Q8BMQ2"/>
<dbReference type="jPOST" id="Q8BMQ2"/>
<dbReference type="PaxDb" id="10090-ENSMUSP00000042265"/>
<dbReference type="PeptideAtlas" id="Q8BMQ2"/>
<dbReference type="ProteomicsDB" id="258857">
    <molecule id="Q8BMQ2-1"/>
</dbReference>
<dbReference type="ProteomicsDB" id="258858">
    <molecule id="Q8BMQ2-2"/>
</dbReference>
<dbReference type="ProteomicsDB" id="258859">
    <molecule id="Q8BMQ2-3"/>
</dbReference>
<dbReference type="Pumba" id="Q8BMQ2"/>
<dbReference type="Antibodypedia" id="31705">
    <property type="antibodies" value="214 antibodies from 27 providers"/>
</dbReference>
<dbReference type="DNASU" id="269252"/>
<dbReference type="Ensembl" id="ENSMUST00000037117.6">
    <molecule id="Q8BMQ2-1"/>
    <property type="protein sequence ID" value="ENSMUSP00000042265.6"/>
    <property type="gene ID" value="ENSMUSG00000035666.15"/>
</dbReference>
<dbReference type="GeneID" id="269252"/>
<dbReference type="KEGG" id="mmu:269252"/>
<dbReference type="UCSC" id="uc008ize.2">
    <molecule id="Q8BMQ2-1"/>
    <property type="organism name" value="mouse"/>
</dbReference>
<dbReference type="AGR" id="MGI:2138937"/>
<dbReference type="CTD" id="9329"/>
<dbReference type="MGI" id="MGI:2138937">
    <property type="gene designation" value="Gtf3c4"/>
</dbReference>
<dbReference type="VEuPathDB" id="HostDB:ENSMUSG00000035666"/>
<dbReference type="eggNOG" id="ENOG502QTDJ">
    <property type="taxonomic scope" value="Eukaryota"/>
</dbReference>
<dbReference type="GeneTree" id="ENSGT00390000011873"/>
<dbReference type="InParanoid" id="Q8BMQ2"/>
<dbReference type="OMA" id="NGHVWLR"/>
<dbReference type="OrthoDB" id="6021743at2759"/>
<dbReference type="TreeFam" id="TF328412"/>
<dbReference type="Reactome" id="R-MMU-76061">
    <property type="pathway name" value="RNA Polymerase III Transcription Initiation From Type 1 Promoter"/>
</dbReference>
<dbReference type="Reactome" id="R-MMU-76066">
    <property type="pathway name" value="RNA Polymerase III Transcription Initiation From Type 2 Promoter"/>
</dbReference>
<dbReference type="BioGRID-ORCS" id="269252">
    <property type="hits" value="21 hits in 83 CRISPR screens"/>
</dbReference>
<dbReference type="ChiTaRS" id="Gtf3c4">
    <property type="organism name" value="mouse"/>
</dbReference>
<dbReference type="PRO" id="PR:Q8BMQ2"/>
<dbReference type="Proteomes" id="UP000000589">
    <property type="component" value="Chromosome 2"/>
</dbReference>
<dbReference type="RNAct" id="Q8BMQ2">
    <property type="molecule type" value="protein"/>
</dbReference>
<dbReference type="Bgee" id="ENSMUSG00000035666">
    <property type="expression patterns" value="Expressed in metanephric mesenchyme and 257 other cell types or tissues"/>
</dbReference>
<dbReference type="ExpressionAtlas" id="Q8BMQ2">
    <property type="expression patterns" value="baseline and differential"/>
</dbReference>
<dbReference type="GO" id="GO:0005739">
    <property type="term" value="C:mitochondrion"/>
    <property type="evidence" value="ECO:0007669"/>
    <property type="project" value="Ensembl"/>
</dbReference>
<dbReference type="GO" id="GO:0005654">
    <property type="term" value="C:nucleoplasm"/>
    <property type="evidence" value="ECO:0007669"/>
    <property type="project" value="Ensembl"/>
</dbReference>
<dbReference type="GO" id="GO:0000127">
    <property type="term" value="C:transcription factor TFIIIC complex"/>
    <property type="evidence" value="ECO:0007669"/>
    <property type="project" value="Ensembl"/>
</dbReference>
<dbReference type="GO" id="GO:0003677">
    <property type="term" value="F:DNA binding"/>
    <property type="evidence" value="ECO:0007669"/>
    <property type="project" value="UniProtKB-KW"/>
</dbReference>
<dbReference type="GO" id="GO:0036408">
    <property type="term" value="F:histone H3K14 acetyltransferase activity"/>
    <property type="evidence" value="ECO:0007669"/>
    <property type="project" value="Ensembl"/>
</dbReference>
<dbReference type="GO" id="GO:0000995">
    <property type="term" value="F:RNA polymerase III general transcription initiation factor activity"/>
    <property type="evidence" value="ECO:0007669"/>
    <property type="project" value="Ensembl"/>
</dbReference>
<dbReference type="GO" id="GO:0006384">
    <property type="term" value="P:transcription initiation at RNA polymerase III promoter"/>
    <property type="evidence" value="ECO:0007669"/>
    <property type="project" value="InterPro"/>
</dbReference>
<dbReference type="Gene3D" id="2.130.10.10">
    <property type="entry name" value="YVTN repeat-like/Quinoprotein amine dehydrogenase"/>
    <property type="match status" value="1"/>
</dbReference>
<dbReference type="InterPro" id="IPR045803">
    <property type="entry name" value="DUF5921"/>
</dbReference>
<dbReference type="InterPro" id="IPR044230">
    <property type="entry name" value="GTF3C4"/>
</dbReference>
<dbReference type="InterPro" id="IPR024761">
    <property type="entry name" value="TFIIIC_delta_N"/>
</dbReference>
<dbReference type="InterPro" id="IPR024764">
    <property type="entry name" value="TFIIIC_Znf"/>
</dbReference>
<dbReference type="InterPro" id="IPR015943">
    <property type="entry name" value="WD40/YVTN_repeat-like_dom_sf"/>
</dbReference>
<dbReference type="InterPro" id="IPR036322">
    <property type="entry name" value="WD40_repeat_dom_sf"/>
</dbReference>
<dbReference type="PANTHER" id="PTHR15496:SF2">
    <property type="entry name" value="GENERAL TRANSCRIPTION FACTOR 3C POLYPEPTIDE 4"/>
    <property type="match status" value="1"/>
</dbReference>
<dbReference type="PANTHER" id="PTHR15496">
    <property type="entry name" value="GENERAL TRANSCRIPTION FACTOR 3C POLYPEPTIDE 4 FAMILY"/>
    <property type="match status" value="1"/>
</dbReference>
<dbReference type="Pfam" id="PF19336">
    <property type="entry name" value="DUF5921"/>
    <property type="match status" value="1"/>
</dbReference>
<dbReference type="Pfam" id="PF12657">
    <property type="entry name" value="TFIIIC_delta"/>
    <property type="match status" value="1"/>
</dbReference>
<dbReference type="Pfam" id="PF12660">
    <property type="entry name" value="zf-TFIIIC"/>
    <property type="match status" value="1"/>
</dbReference>
<dbReference type="SUPFAM" id="SSF50978">
    <property type="entry name" value="WD40 repeat-like"/>
    <property type="match status" value="1"/>
</dbReference>
<organism>
    <name type="scientific">Mus musculus</name>
    <name type="common">Mouse</name>
    <dbReference type="NCBI Taxonomy" id="10090"/>
    <lineage>
        <taxon>Eukaryota</taxon>
        <taxon>Metazoa</taxon>
        <taxon>Chordata</taxon>
        <taxon>Craniata</taxon>
        <taxon>Vertebrata</taxon>
        <taxon>Euteleostomi</taxon>
        <taxon>Mammalia</taxon>
        <taxon>Eutheria</taxon>
        <taxon>Euarchontoglires</taxon>
        <taxon>Glires</taxon>
        <taxon>Rodentia</taxon>
        <taxon>Myomorpha</taxon>
        <taxon>Muroidea</taxon>
        <taxon>Muridae</taxon>
        <taxon>Murinae</taxon>
        <taxon>Mus</taxon>
        <taxon>Mus</taxon>
    </lineage>
</organism>
<gene>
    <name type="primary">Gtf3c4</name>
</gene>
<keyword id="KW-0007">Acetylation</keyword>
<keyword id="KW-0012">Acyltransferase</keyword>
<keyword id="KW-0025">Alternative splicing</keyword>
<keyword id="KW-0238">DNA-binding</keyword>
<keyword id="KW-1017">Isopeptide bond</keyword>
<keyword id="KW-0539">Nucleus</keyword>
<keyword id="KW-0597">Phosphoprotein</keyword>
<keyword id="KW-1185">Reference proteome</keyword>
<keyword id="KW-0804">Transcription</keyword>
<keyword id="KW-0808">Transferase</keyword>
<keyword id="KW-0832">Ubl conjugation</keyword>
<reference key="1">
    <citation type="journal article" date="2005" name="Science">
        <title>The transcriptional landscape of the mammalian genome.</title>
        <authorList>
            <person name="Carninci P."/>
            <person name="Kasukawa T."/>
            <person name="Katayama S."/>
            <person name="Gough J."/>
            <person name="Frith M.C."/>
            <person name="Maeda N."/>
            <person name="Oyama R."/>
            <person name="Ravasi T."/>
            <person name="Lenhard B."/>
            <person name="Wells C."/>
            <person name="Kodzius R."/>
            <person name="Shimokawa K."/>
            <person name="Bajic V.B."/>
            <person name="Brenner S.E."/>
            <person name="Batalov S."/>
            <person name="Forrest A.R."/>
            <person name="Zavolan M."/>
            <person name="Davis M.J."/>
            <person name="Wilming L.G."/>
            <person name="Aidinis V."/>
            <person name="Allen J.E."/>
            <person name="Ambesi-Impiombato A."/>
            <person name="Apweiler R."/>
            <person name="Aturaliya R.N."/>
            <person name="Bailey T.L."/>
            <person name="Bansal M."/>
            <person name="Baxter L."/>
            <person name="Beisel K.W."/>
            <person name="Bersano T."/>
            <person name="Bono H."/>
            <person name="Chalk A.M."/>
            <person name="Chiu K.P."/>
            <person name="Choudhary V."/>
            <person name="Christoffels A."/>
            <person name="Clutterbuck D.R."/>
            <person name="Crowe M.L."/>
            <person name="Dalla E."/>
            <person name="Dalrymple B.P."/>
            <person name="de Bono B."/>
            <person name="Della Gatta G."/>
            <person name="di Bernardo D."/>
            <person name="Down T."/>
            <person name="Engstrom P."/>
            <person name="Fagiolini M."/>
            <person name="Faulkner G."/>
            <person name="Fletcher C.F."/>
            <person name="Fukushima T."/>
            <person name="Furuno M."/>
            <person name="Futaki S."/>
            <person name="Gariboldi M."/>
            <person name="Georgii-Hemming P."/>
            <person name="Gingeras T.R."/>
            <person name="Gojobori T."/>
            <person name="Green R.E."/>
            <person name="Gustincich S."/>
            <person name="Harbers M."/>
            <person name="Hayashi Y."/>
            <person name="Hensch T.K."/>
            <person name="Hirokawa N."/>
            <person name="Hill D."/>
            <person name="Huminiecki L."/>
            <person name="Iacono M."/>
            <person name="Ikeo K."/>
            <person name="Iwama A."/>
            <person name="Ishikawa T."/>
            <person name="Jakt M."/>
            <person name="Kanapin A."/>
            <person name="Katoh M."/>
            <person name="Kawasawa Y."/>
            <person name="Kelso J."/>
            <person name="Kitamura H."/>
            <person name="Kitano H."/>
            <person name="Kollias G."/>
            <person name="Krishnan S.P."/>
            <person name="Kruger A."/>
            <person name="Kummerfeld S.K."/>
            <person name="Kurochkin I.V."/>
            <person name="Lareau L.F."/>
            <person name="Lazarevic D."/>
            <person name="Lipovich L."/>
            <person name="Liu J."/>
            <person name="Liuni S."/>
            <person name="McWilliam S."/>
            <person name="Madan Babu M."/>
            <person name="Madera M."/>
            <person name="Marchionni L."/>
            <person name="Matsuda H."/>
            <person name="Matsuzawa S."/>
            <person name="Miki H."/>
            <person name="Mignone F."/>
            <person name="Miyake S."/>
            <person name="Morris K."/>
            <person name="Mottagui-Tabar S."/>
            <person name="Mulder N."/>
            <person name="Nakano N."/>
            <person name="Nakauchi H."/>
            <person name="Ng P."/>
            <person name="Nilsson R."/>
            <person name="Nishiguchi S."/>
            <person name="Nishikawa S."/>
            <person name="Nori F."/>
            <person name="Ohara O."/>
            <person name="Okazaki Y."/>
            <person name="Orlando V."/>
            <person name="Pang K.C."/>
            <person name="Pavan W.J."/>
            <person name="Pavesi G."/>
            <person name="Pesole G."/>
            <person name="Petrovsky N."/>
            <person name="Piazza S."/>
            <person name="Reed J."/>
            <person name="Reid J.F."/>
            <person name="Ring B.Z."/>
            <person name="Ringwald M."/>
            <person name="Rost B."/>
            <person name="Ruan Y."/>
            <person name="Salzberg S.L."/>
            <person name="Sandelin A."/>
            <person name="Schneider C."/>
            <person name="Schoenbach C."/>
            <person name="Sekiguchi K."/>
            <person name="Semple C.A."/>
            <person name="Seno S."/>
            <person name="Sessa L."/>
            <person name="Sheng Y."/>
            <person name="Shibata Y."/>
            <person name="Shimada H."/>
            <person name="Shimada K."/>
            <person name="Silva D."/>
            <person name="Sinclair B."/>
            <person name="Sperling S."/>
            <person name="Stupka E."/>
            <person name="Sugiura K."/>
            <person name="Sultana R."/>
            <person name="Takenaka Y."/>
            <person name="Taki K."/>
            <person name="Tammoja K."/>
            <person name="Tan S.L."/>
            <person name="Tang S."/>
            <person name="Taylor M.S."/>
            <person name="Tegner J."/>
            <person name="Teichmann S.A."/>
            <person name="Ueda H.R."/>
            <person name="van Nimwegen E."/>
            <person name="Verardo R."/>
            <person name="Wei C.L."/>
            <person name="Yagi K."/>
            <person name="Yamanishi H."/>
            <person name="Zabarovsky E."/>
            <person name="Zhu S."/>
            <person name="Zimmer A."/>
            <person name="Hide W."/>
            <person name="Bult C."/>
            <person name="Grimmond S.M."/>
            <person name="Teasdale R.D."/>
            <person name="Liu E.T."/>
            <person name="Brusic V."/>
            <person name="Quackenbush J."/>
            <person name="Wahlestedt C."/>
            <person name="Mattick J.S."/>
            <person name="Hume D.A."/>
            <person name="Kai C."/>
            <person name="Sasaki D."/>
            <person name="Tomaru Y."/>
            <person name="Fukuda S."/>
            <person name="Kanamori-Katayama M."/>
            <person name="Suzuki M."/>
            <person name="Aoki J."/>
            <person name="Arakawa T."/>
            <person name="Iida J."/>
            <person name="Imamura K."/>
            <person name="Itoh M."/>
            <person name="Kato T."/>
            <person name="Kawaji H."/>
            <person name="Kawagashira N."/>
            <person name="Kawashima T."/>
            <person name="Kojima M."/>
            <person name="Kondo S."/>
            <person name="Konno H."/>
            <person name="Nakano K."/>
            <person name="Ninomiya N."/>
            <person name="Nishio T."/>
            <person name="Okada M."/>
            <person name="Plessy C."/>
            <person name="Shibata K."/>
            <person name="Shiraki T."/>
            <person name="Suzuki S."/>
            <person name="Tagami M."/>
            <person name="Waki K."/>
            <person name="Watahiki A."/>
            <person name="Okamura-Oho Y."/>
            <person name="Suzuki H."/>
            <person name="Kawai J."/>
            <person name="Hayashizaki Y."/>
        </authorList>
    </citation>
    <scope>NUCLEOTIDE SEQUENCE [LARGE SCALE MRNA] (ISOFORMS 1 AND 2)</scope>
    <source>
        <strain>C57BL/6J</strain>
        <tissue>Corpus striatum</tissue>
        <tissue>Pituitary</tissue>
    </source>
</reference>
<reference key="2">
    <citation type="journal article" date="2009" name="PLoS Biol.">
        <title>Lineage-specific biology revealed by a finished genome assembly of the mouse.</title>
        <authorList>
            <person name="Church D.M."/>
            <person name="Goodstadt L."/>
            <person name="Hillier L.W."/>
            <person name="Zody M.C."/>
            <person name="Goldstein S."/>
            <person name="She X."/>
            <person name="Bult C.J."/>
            <person name="Agarwala R."/>
            <person name="Cherry J.L."/>
            <person name="DiCuccio M."/>
            <person name="Hlavina W."/>
            <person name="Kapustin Y."/>
            <person name="Meric P."/>
            <person name="Maglott D."/>
            <person name="Birtle Z."/>
            <person name="Marques A.C."/>
            <person name="Graves T."/>
            <person name="Zhou S."/>
            <person name="Teague B."/>
            <person name="Potamousis K."/>
            <person name="Churas C."/>
            <person name="Place M."/>
            <person name="Herschleb J."/>
            <person name="Runnheim R."/>
            <person name="Forrest D."/>
            <person name="Amos-Landgraf J."/>
            <person name="Schwartz D.C."/>
            <person name="Cheng Z."/>
            <person name="Lindblad-Toh K."/>
            <person name="Eichler E.E."/>
            <person name="Ponting C.P."/>
        </authorList>
    </citation>
    <scope>NUCLEOTIDE SEQUENCE [LARGE SCALE GENOMIC DNA]</scope>
    <source>
        <strain>C57BL/6J</strain>
    </source>
</reference>
<reference key="3">
    <citation type="submission" date="2005-07" db="EMBL/GenBank/DDBJ databases">
        <authorList>
            <person name="Mural R.J."/>
            <person name="Adams M.D."/>
            <person name="Myers E.W."/>
            <person name="Smith H.O."/>
            <person name="Venter J.C."/>
        </authorList>
    </citation>
    <scope>NUCLEOTIDE SEQUENCE [LARGE SCALE GENOMIC DNA]</scope>
</reference>
<reference key="4">
    <citation type="journal article" date="2004" name="Genome Res.">
        <title>The status, quality, and expansion of the NIH full-length cDNA project: the Mammalian Gene Collection (MGC).</title>
        <authorList>
            <consortium name="The MGC Project Team"/>
        </authorList>
    </citation>
    <scope>NUCLEOTIDE SEQUENCE [LARGE SCALE MRNA] (ISOFORMS 1 AND 3)</scope>
    <source>
        <tissue>Limb</tissue>
    </source>
</reference>
<reference key="5">
    <citation type="journal article" date="2010" name="Cell">
        <title>A tissue-specific atlas of mouse protein phosphorylation and expression.</title>
        <authorList>
            <person name="Huttlin E.L."/>
            <person name="Jedrychowski M.P."/>
            <person name="Elias J.E."/>
            <person name="Goswami T."/>
            <person name="Rad R."/>
            <person name="Beausoleil S.A."/>
            <person name="Villen J."/>
            <person name="Haas W."/>
            <person name="Sowa M.E."/>
            <person name="Gygi S.P."/>
        </authorList>
    </citation>
    <scope>PHOSPHORYLATION [LARGE SCALE ANALYSIS] AT SER-607</scope>
    <scope>IDENTIFICATION BY MASS SPECTROMETRY [LARGE SCALE ANALYSIS]</scope>
    <source>
        <tissue>Kidney</tissue>
        <tissue>Liver</tissue>
        <tissue>Pancreas</tissue>
        <tissue>Testis</tissue>
    </source>
</reference>
<sequence length="817" mass="91613">MSEADQALVGPKADEPSPPAEEKDEGGGKEAAADAAPGPSASFRLMVTRREPAVKLQYAVSGLEPLSWSEDHRVSVSTARSVAVLELICDVHNPGQDLVIHRTSVPAPLNSCLLKVGSKTEVAECKEKFASSKDPTISQTFMLDRMFNPEGKALPPMRGFKYTSWSPMGCDANGRCLLAALTMDNRLTVQVNLNRLQWVQLVDLTEIYGDRLYETSYRLSKNEAPEGNLGDFAEFQRRHSMQTPVRMEWSSICTTQQVKHNNECRDVSSVLLAVLFENGNIAVWQFQLPFVGKESISSCNTIESGISSPSVLFWWEYEHNNRKMSGLIVGSAFGPVKILPVNLKAVKGYFTLRQPVVLWKEMDKLPVHSIKCVPLYHPYQKCSCSLVVAARGSYVFWCLLLISKAGLNVHNSHVTGLHSLPIVSITADKQNGTVYTCSSDGKVRQLIPIFTDVALKFEHQLIKLSDVFGSVRTHGIAVSPCGAYLAIITTEGMMNGLHPVNKNYQVQFVTLKTFEEAAAQLLESSVQNLFKQVDLIDLVRWKILKDKHIPQFLHEALEKKIESSGVTYFWRFKLFLLRILYQSMQKSPSEALWKPTHEDSKILLVDSPGMGDGEDEQQEEGTSKQGTKAGLQEKSKEGDTEETPEDSLTAGGDTGGREPVEEKLLEIQGKIEAVEMHLTREHMKRVLGEVYLHTWITENTSIPTRGLCNFLMSDEDYDDRTAQVLIGHISKKMNKQTFPERCSLCKEILPFTDRKQAVCSNGHIWLRCFLTYQSCQSLIYRRCLLHDSIARHPVPEDPDWIKRLLQSPCPFCDSPVF</sequence>
<protein>
    <recommendedName>
        <fullName>General transcription factor 3C polypeptide 4</fullName>
        <ecNumber evidence="2">2.3.1.48</ecNumber>
    </recommendedName>
    <alternativeName>
        <fullName>TF3C-delta</fullName>
    </alternativeName>
    <alternativeName>
        <fullName>Transcription factor IIIC 90 kDa subunit</fullName>
        <shortName>TFIIIC 90 kDa subunit</shortName>
        <shortName>TFIIIC90</shortName>
    </alternativeName>
    <alternativeName>
        <fullName>Transcription factor IIIC subunit delta</fullName>
    </alternativeName>
</protein>
<proteinExistence type="evidence at protein level"/>